<feature type="chain" id="PRO_0000452791" description="Small polypeptide DEVIL 23">
    <location>
        <begin position="1"/>
        <end position="45"/>
    </location>
</feature>
<feature type="transmembrane region" description="Helical" evidence="3">
    <location>
        <begin position="22"/>
        <end position="39"/>
    </location>
</feature>
<feature type="region of interest" description="Required for DVL/RTFL small polypeptide activity" evidence="2">
    <location>
        <begin position="13"/>
        <end position="44"/>
    </location>
</feature>
<protein>
    <recommendedName>
        <fullName evidence="5">Small polypeptide DEVIL 23</fullName>
    </recommendedName>
    <alternativeName>
        <fullName evidence="4">Small polypeptide ROTUNDIFOLIA LIKE 13</fullName>
        <shortName evidence="4">Small polypeptide ROT-FOUR-LIKE 13</shortName>
    </alternativeName>
</protein>
<name>DVL23_ARATH</name>
<gene>
    <name evidence="5" type="primary">DVL23</name>
    <name evidence="4" type="synonym">RTFL13</name>
    <name evidence="6" type="ordered locus">At3g23635</name>
    <name evidence="7" type="ORF">MDB19</name>
</gene>
<accession>A8MRE9</accession>
<keyword id="KW-1003">Cell membrane</keyword>
<keyword id="KW-0217">Developmental protein</keyword>
<keyword id="KW-0472">Membrane</keyword>
<keyword id="KW-1185">Reference proteome</keyword>
<keyword id="KW-0812">Transmembrane</keyword>
<keyword id="KW-1133">Transmembrane helix</keyword>
<proteinExistence type="inferred from homology"/>
<dbReference type="EMBL" id="AB023036">
    <property type="status" value="NOT_ANNOTATED_CDS"/>
    <property type="molecule type" value="Genomic_DNA"/>
</dbReference>
<dbReference type="EMBL" id="CP002686">
    <property type="protein sequence ID" value="AEE76791.2"/>
    <property type="molecule type" value="Genomic_DNA"/>
</dbReference>
<dbReference type="RefSeq" id="NP_001319626.1">
    <property type="nucleotide sequence ID" value="NM_001338652.1"/>
</dbReference>
<dbReference type="STRING" id="3702.A8MRE9"/>
<dbReference type="PaxDb" id="3702-AT3G23635.1"/>
<dbReference type="EnsemblPlants" id="AT3G23635.1">
    <property type="protein sequence ID" value="AT3G23635.1"/>
    <property type="gene ID" value="AT3G23635"/>
</dbReference>
<dbReference type="GeneID" id="28719310"/>
<dbReference type="Gramene" id="AT3G23635.1">
    <property type="protein sequence ID" value="AT3G23635.1"/>
    <property type="gene ID" value="AT3G23635"/>
</dbReference>
<dbReference type="KEGG" id="ath:AT3G23635"/>
<dbReference type="Araport" id="AT3G23635"/>
<dbReference type="TAIR" id="AT3G23635">
    <property type="gene designation" value="RTFL13"/>
</dbReference>
<dbReference type="HOGENOM" id="CLU_3242847_0_0_1"/>
<dbReference type="InParanoid" id="A8MRE9"/>
<dbReference type="OrthoDB" id="1020556at2759"/>
<dbReference type="PRO" id="PR:A8MRE9"/>
<dbReference type="Proteomes" id="UP000006548">
    <property type="component" value="Chromosome 3"/>
</dbReference>
<dbReference type="ExpressionAtlas" id="A8MRE9">
    <property type="expression patterns" value="baseline and differential"/>
</dbReference>
<dbReference type="GO" id="GO:0005886">
    <property type="term" value="C:plasma membrane"/>
    <property type="evidence" value="ECO:0000250"/>
    <property type="project" value="UniProtKB"/>
</dbReference>
<dbReference type="GO" id="GO:0008285">
    <property type="term" value="P:negative regulation of cell population proliferation"/>
    <property type="evidence" value="ECO:0000250"/>
    <property type="project" value="UniProtKB"/>
</dbReference>
<dbReference type="GO" id="GO:0048367">
    <property type="term" value="P:shoot system development"/>
    <property type="evidence" value="ECO:0007669"/>
    <property type="project" value="UniProtKB-ARBA"/>
</dbReference>
<dbReference type="InterPro" id="IPR012552">
    <property type="entry name" value="DVL"/>
</dbReference>
<dbReference type="Pfam" id="PF08137">
    <property type="entry name" value="DVL"/>
    <property type="match status" value="1"/>
</dbReference>
<reference key="1">
    <citation type="journal article" date="2000" name="DNA Res.">
        <title>Structural analysis of Arabidopsis thaliana chromosome 3. I. Sequence features of the regions of 4,504,864 bp covered by sixty P1 and TAC clones.</title>
        <authorList>
            <person name="Sato S."/>
            <person name="Nakamura Y."/>
            <person name="Kaneko T."/>
            <person name="Katoh T."/>
            <person name="Asamizu E."/>
            <person name="Tabata S."/>
        </authorList>
    </citation>
    <scope>NUCLEOTIDE SEQUENCE [LARGE SCALE GENOMIC DNA]</scope>
    <source>
        <strain>cv. Columbia</strain>
    </source>
</reference>
<reference key="2">
    <citation type="journal article" date="2017" name="Plant J.">
        <title>Araport11: a complete reannotation of the Arabidopsis thaliana reference genome.</title>
        <authorList>
            <person name="Cheng C.Y."/>
            <person name="Krishnakumar V."/>
            <person name="Chan A.P."/>
            <person name="Thibaud-Nissen F."/>
            <person name="Schobel S."/>
            <person name="Town C.D."/>
        </authorList>
    </citation>
    <scope>GENOME REANNOTATION</scope>
    <source>
        <strain>cv. Columbia</strain>
    </source>
</reference>
<reference key="3">
    <citation type="journal article" date="2004" name="Plant J.">
        <title>DVL, a novel class of small polypeptides: overexpression alters Arabidopsis development.</title>
        <authorList>
            <person name="Wen J."/>
            <person name="Lease K.A."/>
            <person name="Walker J.C."/>
        </authorList>
    </citation>
    <scope>GENE FAMILY</scope>
    <scope>NOMENCLATURE</scope>
    <source>
        <strain>cv. Columbia</strain>
    </source>
</reference>
<reference key="4">
    <citation type="journal article" date="2004" name="Plant J.">
        <title>Overexpression of a novel small peptide ROTUNDIFOLIA4 decreases cell proliferation and alters leaf shape in Arabidopsis thaliana.</title>
        <authorList>
            <person name="Narita N.N."/>
            <person name="Moore S."/>
            <person name="Horiguchi G."/>
            <person name="Kubo M."/>
            <person name="Demura T."/>
            <person name="Fukuda H."/>
            <person name="Goodrich J."/>
            <person name="Tsukaya H."/>
        </authorList>
    </citation>
    <scope>GENE FAMILY</scope>
    <source>
        <strain>cv. Columbia</strain>
        <strain>cv. Landsberg erecta</strain>
    </source>
</reference>
<reference key="5">
    <citation type="journal article" date="2015" name="J. Plant Res.">
        <title>Comparative analysis of the RTFL peptide family on the control of plant organogenesis.</title>
        <authorList>
            <person name="Guo P."/>
            <person name="Yoshimura A."/>
            <person name="Ishikawa N."/>
            <person name="Yamaguchi T."/>
            <person name="Guo Y."/>
            <person name="Tsukaya H."/>
        </authorList>
    </citation>
    <scope>REVIEW</scope>
    <scope>GENE FAMILY</scope>
    <scope>NOMENCLATURE</scope>
    <source>
        <strain>cv. Columbia</strain>
    </source>
</reference>
<evidence type="ECO:0000250" key="1">
    <source>
        <dbReference type="UniProtKB" id="Q6X5V0"/>
    </source>
</evidence>
<evidence type="ECO:0000250" key="2">
    <source>
        <dbReference type="UniProtKB" id="Q7XXN8"/>
    </source>
</evidence>
<evidence type="ECO:0000255" key="3"/>
<evidence type="ECO:0000303" key="4">
    <source>
    </source>
</evidence>
<evidence type="ECO:0000305" key="5"/>
<evidence type="ECO:0000312" key="6">
    <source>
        <dbReference type="Araport" id="AT3G23635"/>
    </source>
</evidence>
<evidence type="ECO:0000312" key="7">
    <source>
        <dbReference type="EMBL" id="AB023036"/>
    </source>
</evidence>
<comment type="function">
    <text evidence="1">Small polypeptide acting as a regulatory molecule which coordinates cellular responses required for differentiation, growth and development, probably by restricting polar cell proliferation in lateral organs and coordinating socket cell recruitment and differentiation at trichome sites.</text>
</comment>
<comment type="subcellular location">
    <subcellularLocation>
        <location evidence="2">Cell membrane</location>
        <topology evidence="3">Single-pass membrane protein</topology>
    </subcellularLocation>
</comment>
<comment type="similarity">
    <text evidence="5">Belongs to the DVL/RTFL small polypeptides family.</text>
</comment>
<sequence>MKMSERRVGSYRKSTLRCWDWCKEQRTRAYIIWRCLIFLLRWDDY</sequence>
<organism>
    <name type="scientific">Arabidopsis thaliana</name>
    <name type="common">Mouse-ear cress</name>
    <dbReference type="NCBI Taxonomy" id="3702"/>
    <lineage>
        <taxon>Eukaryota</taxon>
        <taxon>Viridiplantae</taxon>
        <taxon>Streptophyta</taxon>
        <taxon>Embryophyta</taxon>
        <taxon>Tracheophyta</taxon>
        <taxon>Spermatophyta</taxon>
        <taxon>Magnoliopsida</taxon>
        <taxon>eudicotyledons</taxon>
        <taxon>Gunneridae</taxon>
        <taxon>Pentapetalae</taxon>
        <taxon>rosids</taxon>
        <taxon>malvids</taxon>
        <taxon>Brassicales</taxon>
        <taxon>Brassicaceae</taxon>
        <taxon>Camelineae</taxon>
        <taxon>Arabidopsis</taxon>
    </lineage>
</organism>